<name>FENR_LACAC</name>
<proteinExistence type="inferred from homology"/>
<protein>
    <recommendedName>
        <fullName evidence="1">Ferredoxin--NADP reductase</fullName>
        <shortName evidence="1">FNR</shortName>
        <shortName evidence="1">Fd-NADP(+) reductase</shortName>
        <ecNumber evidence="1">1.18.1.2</ecNumber>
    </recommendedName>
</protein>
<accession>Q5FLU4</accession>
<keyword id="KW-0274">FAD</keyword>
<keyword id="KW-0285">Flavoprotein</keyword>
<keyword id="KW-0521">NADP</keyword>
<keyword id="KW-0560">Oxidoreductase</keyword>
<keyword id="KW-1185">Reference proteome</keyword>
<reference key="1">
    <citation type="journal article" date="2005" name="Proc. Natl. Acad. Sci. U.S.A.">
        <title>Complete genome sequence of the probiotic lactic acid bacterium Lactobacillus acidophilus NCFM.</title>
        <authorList>
            <person name="Altermann E."/>
            <person name="Russell W.M."/>
            <person name="Azcarate-Peril M.A."/>
            <person name="Barrangou R."/>
            <person name="Buck B.L."/>
            <person name="McAuliffe O."/>
            <person name="Souther N."/>
            <person name="Dobson A."/>
            <person name="Duong T."/>
            <person name="Callanan M."/>
            <person name="Lick S."/>
            <person name="Hamrick A."/>
            <person name="Cano R."/>
            <person name="Klaenhammer T.R."/>
        </authorList>
    </citation>
    <scope>NUCLEOTIDE SEQUENCE [LARGE SCALE GENOMIC DNA]</scope>
    <source>
        <strain>ATCC 700396 / NCK56 / N2 / NCFM</strain>
    </source>
</reference>
<organism>
    <name type="scientific">Lactobacillus acidophilus (strain ATCC 700396 / NCK56 / N2 / NCFM)</name>
    <dbReference type="NCBI Taxonomy" id="272621"/>
    <lineage>
        <taxon>Bacteria</taxon>
        <taxon>Bacillati</taxon>
        <taxon>Bacillota</taxon>
        <taxon>Bacilli</taxon>
        <taxon>Lactobacillales</taxon>
        <taxon>Lactobacillaceae</taxon>
        <taxon>Lactobacillus</taxon>
    </lineage>
</organism>
<evidence type="ECO:0000255" key="1">
    <source>
        <dbReference type="HAMAP-Rule" id="MF_01685"/>
    </source>
</evidence>
<evidence type="ECO:0000305" key="2"/>
<gene>
    <name type="ordered locus">LBA0439</name>
</gene>
<dbReference type="EC" id="1.18.1.2" evidence="1"/>
<dbReference type="EMBL" id="CP000033">
    <property type="protein sequence ID" value="AAV42330.1"/>
    <property type="status" value="ALT_INIT"/>
    <property type="molecule type" value="Genomic_DNA"/>
</dbReference>
<dbReference type="RefSeq" id="YP_193361.1">
    <property type="nucleotide sequence ID" value="NC_006814.3"/>
</dbReference>
<dbReference type="SMR" id="Q5FLU4"/>
<dbReference type="STRING" id="272621.LBA0439"/>
<dbReference type="KEGG" id="lac:LBA0439"/>
<dbReference type="PATRIC" id="fig|272621.13.peg.425"/>
<dbReference type="eggNOG" id="COG0492">
    <property type="taxonomic scope" value="Bacteria"/>
</dbReference>
<dbReference type="HOGENOM" id="CLU_031864_5_5_9"/>
<dbReference type="OrthoDB" id="9806179at2"/>
<dbReference type="Proteomes" id="UP000006381">
    <property type="component" value="Chromosome"/>
</dbReference>
<dbReference type="GO" id="GO:0004324">
    <property type="term" value="F:ferredoxin-NADP+ reductase activity"/>
    <property type="evidence" value="ECO:0007669"/>
    <property type="project" value="UniProtKB-UniRule"/>
</dbReference>
<dbReference type="GO" id="GO:0050660">
    <property type="term" value="F:flavin adenine dinucleotide binding"/>
    <property type="evidence" value="ECO:0007669"/>
    <property type="project" value="UniProtKB-UniRule"/>
</dbReference>
<dbReference type="GO" id="GO:0050661">
    <property type="term" value="F:NADP binding"/>
    <property type="evidence" value="ECO:0007669"/>
    <property type="project" value="UniProtKB-UniRule"/>
</dbReference>
<dbReference type="Gene3D" id="3.50.50.60">
    <property type="entry name" value="FAD/NAD(P)-binding domain"/>
    <property type="match status" value="2"/>
</dbReference>
<dbReference type="HAMAP" id="MF_01685">
    <property type="entry name" value="FENR2"/>
    <property type="match status" value="1"/>
</dbReference>
<dbReference type="InterPro" id="IPR036188">
    <property type="entry name" value="FAD/NAD-bd_sf"/>
</dbReference>
<dbReference type="InterPro" id="IPR023753">
    <property type="entry name" value="FAD/NAD-binding_dom"/>
</dbReference>
<dbReference type="InterPro" id="IPR022890">
    <property type="entry name" value="Fd--NADP_Rdtase_type_2"/>
</dbReference>
<dbReference type="InterPro" id="IPR050097">
    <property type="entry name" value="Ferredoxin-NADP_redctase_2"/>
</dbReference>
<dbReference type="PANTHER" id="PTHR48105">
    <property type="entry name" value="THIOREDOXIN REDUCTASE 1-RELATED-RELATED"/>
    <property type="match status" value="1"/>
</dbReference>
<dbReference type="Pfam" id="PF07992">
    <property type="entry name" value="Pyr_redox_2"/>
    <property type="match status" value="1"/>
</dbReference>
<dbReference type="PRINTS" id="PR00368">
    <property type="entry name" value="FADPNR"/>
</dbReference>
<dbReference type="PRINTS" id="PR00469">
    <property type="entry name" value="PNDRDTASEII"/>
</dbReference>
<dbReference type="SUPFAM" id="SSF51905">
    <property type="entry name" value="FAD/NAD(P)-binding domain"/>
    <property type="match status" value="2"/>
</dbReference>
<feature type="chain" id="PRO_0000364847" description="Ferredoxin--NADP reductase">
    <location>
        <begin position="1"/>
        <end position="309"/>
    </location>
</feature>
<feature type="binding site" evidence="1">
    <location>
        <position position="25"/>
    </location>
    <ligand>
        <name>FAD</name>
        <dbReference type="ChEBI" id="CHEBI:57692"/>
    </ligand>
</feature>
<feature type="binding site" evidence="1">
    <location>
        <position position="33"/>
    </location>
    <ligand>
        <name>FAD</name>
        <dbReference type="ChEBI" id="CHEBI:57692"/>
    </ligand>
</feature>
<feature type="binding site" evidence="1">
    <location>
        <position position="38"/>
    </location>
    <ligand>
        <name>FAD</name>
        <dbReference type="ChEBI" id="CHEBI:57692"/>
    </ligand>
</feature>
<feature type="binding site" evidence="1">
    <location>
        <position position="77"/>
    </location>
    <ligand>
        <name>FAD</name>
        <dbReference type="ChEBI" id="CHEBI:57692"/>
    </ligand>
</feature>
<feature type="binding site" evidence="1">
    <location>
        <position position="107"/>
    </location>
    <ligand>
        <name>FAD</name>
        <dbReference type="ChEBI" id="CHEBI:57692"/>
    </ligand>
</feature>
<feature type="binding site" evidence="1">
    <location>
        <position position="267"/>
    </location>
    <ligand>
        <name>FAD</name>
        <dbReference type="ChEBI" id="CHEBI:57692"/>
    </ligand>
</feature>
<feature type="binding site" evidence="1">
    <location>
        <position position="307"/>
    </location>
    <ligand>
        <name>FAD</name>
        <dbReference type="ChEBI" id="CHEBI:57692"/>
    </ligand>
</feature>
<sequence length="309" mass="34367">MVGDLLGLFAAHFAHLHGLNTIVFDSLSEVGGQPQMLYPFKQINDIPAYNSISGTDLIQKLKHDIKNETEIITNHKVVDVTKQSDGFIIDNIIYARSIIIATGAGAFKPKELPLKISDEIKEKIHYFVKDPSQFKNQTIGVFGGGDSALDLALEVAKYANVKLIHRRDQFRGLESNVKKLKSLKNVEILTPYLPKKIELINNQLDISLKKMGVEQLRNVQLDQIVVAYGFRANNRFAKKWGINLEQSNIPVDPTMKTNIDGIYAAGDVVTYPGRVPLIALGFGEAQIAITSIMRNLFPEKSLTIHSTSI</sequence>
<comment type="catalytic activity">
    <reaction evidence="1">
        <text>2 reduced [2Fe-2S]-[ferredoxin] + NADP(+) + H(+) = 2 oxidized [2Fe-2S]-[ferredoxin] + NADPH</text>
        <dbReference type="Rhea" id="RHEA:20125"/>
        <dbReference type="Rhea" id="RHEA-COMP:10000"/>
        <dbReference type="Rhea" id="RHEA-COMP:10001"/>
        <dbReference type="ChEBI" id="CHEBI:15378"/>
        <dbReference type="ChEBI" id="CHEBI:33737"/>
        <dbReference type="ChEBI" id="CHEBI:33738"/>
        <dbReference type="ChEBI" id="CHEBI:57783"/>
        <dbReference type="ChEBI" id="CHEBI:58349"/>
        <dbReference type="EC" id="1.18.1.2"/>
    </reaction>
</comment>
<comment type="cofactor">
    <cofactor evidence="1">
        <name>FAD</name>
        <dbReference type="ChEBI" id="CHEBI:57692"/>
    </cofactor>
    <text evidence="1">Binds 1 FAD per subunit.</text>
</comment>
<comment type="subunit">
    <text evidence="1">Homodimer.</text>
</comment>
<comment type="similarity">
    <text evidence="1">Belongs to the ferredoxin--NADP reductase type 2 family.</text>
</comment>
<comment type="sequence caution" evidence="2">
    <conflict type="erroneous initiation">
        <sequence resource="EMBL-CDS" id="AAV42330"/>
    </conflict>
</comment>